<sequence length="466" mass="52417">MTELPAPLSYFQNAQMSEDNHLSNTVRSQNDSREQHSSERRRRGNPEPLSNGRPQGSSHQVVEQDDEEDEELTLKYGAKHVIMLFVPVTLCMVVVVATIKSVSFYTRKDGQLIYTPFTEDTETVGQRALHSILNAAIMISVIVVMTILLVVLYKYRCYKVIHAWLIISSLLLLFLFSFIYLGEVFKTYNVAMDYITVALLIWNFGVVGMIAIHWKGPLRLQQAYLIMISALMALVFIKYLPEWTAWLILAVISVYDLVAVLCPKGPLRMLVETAQERNETLFPALIYSSTMVWLVNMAEGDPEAQRKVSKNSNYNAQSTESETQDPVTESDDGGFSEEWEAQRDSRLGPHHSTTETRAAVQELSSNILASEDPEERGVKLGLGDFIFYSVLVGKASATASGDWNTTIACFVAILIGLCLTLLLLAIFKKALPALPISITFGLVFYFATDYLVQPFMDQLAFHQFYI</sequence>
<dbReference type="EC" id="3.4.23.-"/>
<dbReference type="EMBL" id="AY498704">
    <property type="protein sequence ID" value="AAR97724.1"/>
    <property type="molecule type" value="mRNA"/>
</dbReference>
<dbReference type="EMBL" id="AY498705">
    <property type="protein sequence ID" value="AAR97725.1"/>
    <property type="molecule type" value="mRNA"/>
</dbReference>
<dbReference type="RefSeq" id="NP_001002943.2">
    <property type="nucleotide sequence ID" value="NM_001002943.2"/>
</dbReference>
<dbReference type="RefSeq" id="NP_001280213.1">
    <property type="nucleotide sequence ID" value="NM_001293284.1"/>
</dbReference>
<dbReference type="SMR" id="Q6RH31"/>
<dbReference type="CORUM" id="Q6RH31"/>
<dbReference type="FunCoup" id="Q6RH31">
    <property type="interactions" value="2081"/>
</dbReference>
<dbReference type="STRING" id="9615.ENSCAFP00000024732"/>
<dbReference type="MEROPS" id="A22.001"/>
<dbReference type="PaxDb" id="9612-ENSCAFP00000031755"/>
<dbReference type="GeneID" id="403408"/>
<dbReference type="KEGG" id="cfa:403408"/>
<dbReference type="CTD" id="5663"/>
<dbReference type="eggNOG" id="KOG2736">
    <property type="taxonomic scope" value="Eukaryota"/>
</dbReference>
<dbReference type="InParanoid" id="Q6RH31"/>
<dbReference type="OrthoDB" id="20287at2759"/>
<dbReference type="Proteomes" id="UP000002254">
    <property type="component" value="Unplaced"/>
</dbReference>
<dbReference type="Proteomes" id="UP000694429">
    <property type="component" value="Unplaced"/>
</dbReference>
<dbReference type="Proteomes" id="UP000694542">
    <property type="component" value="Unplaced"/>
</dbReference>
<dbReference type="Proteomes" id="UP000805418">
    <property type="component" value="Unplaced"/>
</dbReference>
<dbReference type="GO" id="GO:0016235">
    <property type="term" value="C:aggresome"/>
    <property type="evidence" value="ECO:0000250"/>
    <property type="project" value="UniProtKB"/>
</dbReference>
<dbReference type="GO" id="GO:0031901">
    <property type="term" value="C:early endosome membrane"/>
    <property type="evidence" value="ECO:0007669"/>
    <property type="project" value="UniProtKB-SubCell"/>
</dbReference>
<dbReference type="GO" id="GO:0005783">
    <property type="term" value="C:endoplasmic reticulum"/>
    <property type="evidence" value="ECO:0000250"/>
    <property type="project" value="UniProtKB"/>
</dbReference>
<dbReference type="GO" id="GO:0005789">
    <property type="term" value="C:endoplasmic reticulum membrane"/>
    <property type="evidence" value="ECO:0007669"/>
    <property type="project" value="UniProtKB-SubCell"/>
</dbReference>
<dbReference type="GO" id="GO:0070765">
    <property type="term" value="C:gamma-secretase complex"/>
    <property type="evidence" value="ECO:0000250"/>
    <property type="project" value="UniProtKB"/>
</dbReference>
<dbReference type="GO" id="GO:0005794">
    <property type="term" value="C:Golgi apparatus"/>
    <property type="evidence" value="ECO:0000250"/>
    <property type="project" value="UniProtKB"/>
</dbReference>
<dbReference type="GO" id="GO:0000139">
    <property type="term" value="C:Golgi membrane"/>
    <property type="evidence" value="ECO:0007669"/>
    <property type="project" value="UniProtKB-SubCell"/>
</dbReference>
<dbReference type="GO" id="GO:0030426">
    <property type="term" value="C:growth cone"/>
    <property type="evidence" value="ECO:0000250"/>
    <property type="project" value="UniProtKB"/>
</dbReference>
<dbReference type="GO" id="GO:0016020">
    <property type="term" value="C:membrane"/>
    <property type="evidence" value="ECO:0000250"/>
    <property type="project" value="UniProtKB"/>
</dbReference>
<dbReference type="GO" id="GO:0005739">
    <property type="term" value="C:mitochondrion"/>
    <property type="evidence" value="ECO:0000250"/>
    <property type="project" value="UniProtKB"/>
</dbReference>
<dbReference type="GO" id="GO:0043005">
    <property type="term" value="C:neuron projection"/>
    <property type="evidence" value="ECO:0000250"/>
    <property type="project" value="UniProtKB"/>
</dbReference>
<dbReference type="GO" id="GO:0005886">
    <property type="term" value="C:plasma membrane"/>
    <property type="evidence" value="ECO:0000250"/>
    <property type="project" value="UniProtKB"/>
</dbReference>
<dbReference type="GO" id="GO:0045202">
    <property type="term" value="C:synapse"/>
    <property type="evidence" value="ECO:0007669"/>
    <property type="project" value="UniProtKB-SubCell"/>
</dbReference>
<dbReference type="GO" id="GO:0042500">
    <property type="term" value="F:aspartic endopeptidase activity, intramembrane cleaving"/>
    <property type="evidence" value="ECO:0000250"/>
    <property type="project" value="UniProtKB"/>
</dbReference>
<dbReference type="GO" id="GO:0042982">
    <property type="term" value="P:amyloid precursor protein metabolic process"/>
    <property type="evidence" value="ECO:0000250"/>
    <property type="project" value="UniProtKB"/>
</dbReference>
<dbReference type="GO" id="GO:0034205">
    <property type="term" value="P:amyloid-beta formation"/>
    <property type="evidence" value="ECO:0000250"/>
    <property type="project" value="UniProtKB"/>
</dbReference>
<dbReference type="GO" id="GO:0006915">
    <property type="term" value="P:apoptotic process"/>
    <property type="evidence" value="ECO:0007669"/>
    <property type="project" value="UniProtKB-KW"/>
</dbReference>
<dbReference type="GO" id="GO:0055074">
    <property type="term" value="P:calcium ion homeostasis"/>
    <property type="evidence" value="ECO:0000318"/>
    <property type="project" value="GO_Central"/>
</dbReference>
<dbReference type="GO" id="GO:0007155">
    <property type="term" value="P:cell adhesion"/>
    <property type="evidence" value="ECO:0007669"/>
    <property type="project" value="UniProtKB-KW"/>
</dbReference>
<dbReference type="GO" id="GO:0032469">
    <property type="term" value="P:endoplasmic reticulum calcium ion homeostasis"/>
    <property type="evidence" value="ECO:0000250"/>
    <property type="project" value="UniProtKB"/>
</dbReference>
<dbReference type="GO" id="GO:0035556">
    <property type="term" value="P:intracellular signal transduction"/>
    <property type="evidence" value="ECO:0007669"/>
    <property type="project" value="InterPro"/>
</dbReference>
<dbReference type="GO" id="GO:0006509">
    <property type="term" value="P:membrane protein ectodomain proteolysis"/>
    <property type="evidence" value="ECO:0000250"/>
    <property type="project" value="UniProtKB"/>
</dbReference>
<dbReference type="GO" id="GO:0007219">
    <property type="term" value="P:Notch signaling pathway"/>
    <property type="evidence" value="ECO:0000318"/>
    <property type="project" value="GO_Central"/>
</dbReference>
<dbReference type="GO" id="GO:0016485">
    <property type="term" value="P:protein processing"/>
    <property type="evidence" value="ECO:0000250"/>
    <property type="project" value="UniProtKB"/>
</dbReference>
<dbReference type="GO" id="GO:0060828">
    <property type="term" value="P:regulation of canonical Wnt signaling pathway"/>
    <property type="evidence" value="ECO:0000250"/>
    <property type="project" value="UniProtKB"/>
</dbReference>
<dbReference type="GO" id="GO:0010975">
    <property type="term" value="P:regulation of neuron projection development"/>
    <property type="evidence" value="ECO:0000250"/>
    <property type="project" value="UniProtKB"/>
</dbReference>
<dbReference type="FunFam" id="1.10.472.100:FF:000001">
    <property type="entry name" value="Presenilin"/>
    <property type="match status" value="1"/>
</dbReference>
<dbReference type="Gene3D" id="1.10.472.100">
    <property type="entry name" value="Presenilin"/>
    <property type="match status" value="1"/>
</dbReference>
<dbReference type="InterPro" id="IPR002031">
    <property type="entry name" value="Pept_A22A_PS1"/>
</dbReference>
<dbReference type="InterPro" id="IPR001108">
    <property type="entry name" value="Peptidase_A22A"/>
</dbReference>
<dbReference type="InterPro" id="IPR006639">
    <property type="entry name" value="Preselin/SPP"/>
</dbReference>
<dbReference type="InterPro" id="IPR042524">
    <property type="entry name" value="Presenilin_C"/>
</dbReference>
<dbReference type="PANTHER" id="PTHR10202">
    <property type="entry name" value="PRESENILIN"/>
    <property type="match status" value="1"/>
</dbReference>
<dbReference type="PANTHER" id="PTHR10202:SF18">
    <property type="entry name" value="PRESENILIN-1"/>
    <property type="match status" value="1"/>
</dbReference>
<dbReference type="Pfam" id="PF01080">
    <property type="entry name" value="Presenilin"/>
    <property type="match status" value="1"/>
</dbReference>
<dbReference type="PRINTS" id="PR01072">
    <property type="entry name" value="PRESENILIN"/>
</dbReference>
<dbReference type="PRINTS" id="PR01073">
    <property type="entry name" value="PRESENILIN1"/>
</dbReference>
<dbReference type="SMART" id="SM00730">
    <property type="entry name" value="PSN"/>
    <property type="match status" value="1"/>
</dbReference>
<gene>
    <name type="primary">PSEN1</name>
</gene>
<name>PSN1_CANLF</name>
<comment type="function">
    <text evidence="2 3">Catalytic subunit of the gamma-secretase complex, an endoprotease complex that catalyzes the intramembrane cleavage of integral membrane proteins such as Notch receptors and APP (amyloid-beta precursor protein). Requires the presence of the other members of the gamma-secretase complex for protease activity. Plays a role in Notch and Wnt signaling cascades and regulation of downstream processes via its role in processing key regulatory proteins, and by regulating cytosolic CTNNB1 levels. Stimulates cell-cell adhesion via its interaction with CDH1; this stabilizes the complexes between CDH1 (E-cadherin) and its interaction partners CTNNB1 (beta-catenin), CTNND1 and JUP (gamma-catenin). Under conditions of apoptosis or calcium influx, cleaves CDH1. This promotes the disassembly of the complexes between CDH1 and CTNND1, JUP and CTNNB1, increases the pool of cytoplasmic CTNNB1, and thereby negatively regulates Wnt signaling (By similarity). Required for normal embryonic brain and skeleton development, and for normal angiogenesis (By similarity). Mediates the proteolytic cleavage of EphB2/CTF1 into EphB2/CTF2 (By similarity). The holoprotein functions as a calcium-leak channel that allows the passive movement of calcium from endoplasmic reticulum to cytosol and is therefore involved in calcium homeostasis. Involved in the regulation of neurite outgrowth (By similarity). Is a regulator of presynaptic facilitation, spike transmission and synaptic vesicles replenishment in a process that depends on gamma-secretase activity. It acts through the control of SYT7 presynaptic expression (By similarity).</text>
</comment>
<comment type="subunit">
    <text evidence="2 3 7">Homodimer. The functional gamma-secretase complex is composed of at least four polypeptides: a presenilin homodimer (PSEN1 or PSEN2), nicastrin (NCSTN), APH1 (APH1A or APH1B) and PEN2. Such minimal complex is sufficient for secretase activity. Other components which are associated with the complex include SLC25A64, SLC5A7 and PHB. As part of the gamma-secretase complex, interacts with CRB2 (via transmembrane domain) (By similarity). Predominantly heterodimer of a N-terminal (NTF) and a C-terminal (CTF) endoproteolytical fragment. Associates with proteolytic processed C-terminal fragments C83 and C99 of the amyloid precursor protein (APP). Associates with NOTCH1. Associates with cadherin/catenin adhesion complexes through direct binding to CDH1 or CDH2 (PubMed:11226248). Interaction with CDH1 stabilizes the complex and stimulates cell-cell aggregation. Interaction with CDH2 is essential for trafficking of CDH2 from the endoplasmic reticulum to the plasma membrane. Interacts with CTNND2, CTNNB1, CTNND1, JUP, HERPUD1, FLNA, FLNB, MTCH1, PKP4 and PARL. Interacts through its N-terminus with GFAP (By similarity). Interacts with DOCK3 (By similarity). Interacts with UBQLN1 (By similarity).</text>
</comment>
<comment type="subcellular location">
    <subcellularLocation>
        <location evidence="2">Endoplasmic reticulum</location>
    </subcellularLocation>
    <subcellularLocation>
        <location evidence="2">Endoplasmic reticulum membrane</location>
        <topology evidence="2">Multi-pass membrane protein</topology>
    </subcellularLocation>
    <subcellularLocation>
        <location evidence="2">Golgi apparatus membrane</location>
        <topology evidence="2">Multi-pass membrane protein</topology>
    </subcellularLocation>
    <subcellularLocation>
        <location evidence="2">Cytoplasmic granule</location>
    </subcellularLocation>
    <subcellularLocation>
        <location evidence="2">Cell membrane</location>
        <topology evidence="2">Multi-pass membrane protein</topology>
    </subcellularLocation>
    <subcellularLocation>
        <location evidence="2">Cell projection</location>
        <location evidence="2">Growth cone</location>
    </subcellularLocation>
    <subcellularLocation>
        <location evidence="2">Early endosome</location>
    </subcellularLocation>
    <subcellularLocation>
        <location evidence="2">Early endosome membrane</location>
        <topology evidence="2">Multi-pass membrane protein</topology>
    </subcellularLocation>
    <subcellularLocation>
        <location evidence="2">Cell projection</location>
        <location evidence="2">Neuron projection</location>
    </subcellularLocation>
    <subcellularLocation>
        <location evidence="5">Cell projection</location>
        <location evidence="5">Axon</location>
    </subcellularLocation>
    <subcellularLocation>
        <location evidence="5">Synapse</location>
    </subcellularLocation>
    <text evidence="2">Translocates with bound NOTCH1 from the endoplasmic reticulum and/or Golgi to the cell surface. Colocalizes with CDH1/2 at sites of cell-cell contact. Colocalizes with CTNNB1 in the endoplasmic reticulum and the proximity of the plasma membrane. Also present in azurophil granules of neutrophils. Colocalizes with UBQLN1 in the cell membrane and in cytoplasmic juxtanuclear structures called aggresomes.</text>
</comment>
<comment type="alternative products">
    <event type="alternative splicing"/>
    <isoform>
        <id>Q6RH31-1</id>
        <name>I-466</name>
        <sequence type="displayed"/>
    </isoform>
    <isoform>
        <id>Q6RH31-2</id>
        <name>I-462</name>
        <sequence type="described" ref="VSP_018569"/>
    </isoform>
</comment>
<comment type="domain">
    <text evidence="2">The PAL motif is required for normal active site conformation.</text>
</comment>
<comment type="domain">
    <text evidence="2">Substrates, such as NOTCH1 and APP peptides, are bound between PSEN1 transmembrane domains and via the first lumenal loop and the cytoplasmic loop between the sixth and seventh transmembrane domains. Substrate binding causes a conformation change and formation of an intermolecular antiparallel beta-sheet between PSEN1 and its substrates.</text>
</comment>
<comment type="PTM">
    <text evidence="2">Heterogeneous proteolytic processing generates N-terminal (NTF) and C-terminal (CTF) fragments of approximately 35 and 20 kDa, respectively. During apoptosis, the C-terminal fragment (CTF) is further cleaved by caspase-3 to produce the fragment, PS1-CTF12.</text>
</comment>
<comment type="PTM">
    <text evidence="2">After endoproteolysis, the C-terminal fragment (CTF) is phosphorylated on serine residues by PKA and/or PKC. Phosphorylation on Ser-345 inhibits endoproteolysis.</text>
</comment>
<comment type="similarity">
    <text evidence="9">Belongs to the peptidase A22A family.</text>
</comment>
<feature type="chain" id="PRO_0000236052" description="Presenilin-1 NTF subunit" evidence="1">
    <location>
        <begin position="1"/>
        <end position="297"/>
    </location>
</feature>
<feature type="chain" id="PRO_0000236053" description="Presenilin-1 CTF subunit" evidence="1">
    <location>
        <begin position="298"/>
        <end position="466"/>
    </location>
</feature>
<feature type="chain" id="PRO_0000236054" description="Presenilin-1 CTF12" evidence="1">
    <location>
        <begin position="345"/>
        <end position="466"/>
    </location>
</feature>
<feature type="topological domain" description="Cytoplasmic" evidence="2">
    <location>
        <begin position="1"/>
        <end position="81"/>
    </location>
</feature>
<feature type="transmembrane region" description="Helical" evidence="2">
    <location>
        <begin position="82"/>
        <end position="102"/>
    </location>
</feature>
<feature type="topological domain" description="Lumenal" evidence="2">
    <location>
        <begin position="103"/>
        <end position="131"/>
    </location>
</feature>
<feature type="transmembrane region" description="Helical" evidence="2">
    <location>
        <begin position="132"/>
        <end position="152"/>
    </location>
</feature>
<feature type="topological domain" description="Cytoplasmic" evidence="2">
    <location>
        <begin position="153"/>
        <end position="165"/>
    </location>
</feature>
<feature type="transmembrane region" description="Helical" evidence="2">
    <location>
        <begin position="166"/>
        <end position="188"/>
    </location>
</feature>
<feature type="topological domain" description="Lumenal" evidence="2">
    <location>
        <begin position="189"/>
        <end position="193"/>
    </location>
</feature>
<feature type="transmembrane region" description="Helical" evidence="2">
    <location>
        <begin position="194"/>
        <end position="215"/>
    </location>
</feature>
<feature type="topological domain" description="Cytoplasmic" evidence="2">
    <location>
        <begin position="216"/>
        <end position="219"/>
    </location>
</feature>
<feature type="transmembrane region" description="Helical" evidence="2">
    <location>
        <begin position="220"/>
        <end position="240"/>
    </location>
</feature>
<feature type="topological domain" description="Lumenal" evidence="2">
    <location>
        <begin position="241"/>
        <end position="247"/>
    </location>
</feature>
<feature type="transmembrane region" description="Helical" evidence="2">
    <location>
        <begin position="248"/>
        <end position="271"/>
    </location>
</feature>
<feature type="topological domain" description="Cytoplasmic" evidence="2">
    <location>
        <begin position="272"/>
        <end position="379"/>
    </location>
</feature>
<feature type="transmembrane region" description="Helical" evidence="2">
    <location>
        <begin position="380"/>
        <end position="400"/>
    </location>
</feature>
<feature type="topological domain" description="Lumenal" evidence="2">
    <location>
        <begin position="401"/>
        <end position="406"/>
    </location>
</feature>
<feature type="transmembrane region" description="Helical" evidence="2">
    <location>
        <begin position="407"/>
        <end position="427"/>
    </location>
</feature>
<feature type="topological domain" description="Cytoplasmic" evidence="2">
    <location>
        <begin position="428"/>
        <end position="431"/>
    </location>
</feature>
<feature type="transmembrane region" description="Helical" evidence="2">
    <location>
        <begin position="432"/>
        <end position="452"/>
    </location>
</feature>
<feature type="topological domain" description="Lumenal" evidence="2">
    <location>
        <begin position="453"/>
        <end position="466"/>
    </location>
</feature>
<feature type="region of interest" description="Disordered" evidence="6">
    <location>
        <begin position="1"/>
        <end position="66"/>
    </location>
</feature>
<feature type="region of interest" description="Important for cleavage of target proteins" evidence="2">
    <location>
        <begin position="287"/>
        <end position="289"/>
    </location>
</feature>
<feature type="region of interest" description="Disordered" evidence="6">
    <location>
        <begin position="304"/>
        <end position="335"/>
    </location>
</feature>
<feature type="region of interest" description="Required for interaction with CTNNB1" evidence="2">
    <location>
        <begin position="321"/>
        <end position="449"/>
    </location>
</feature>
<feature type="region of interest" description="Required for interaction with CTNND2" evidence="2">
    <location>
        <begin position="371"/>
        <end position="398"/>
    </location>
</feature>
<feature type="region of interest" description="Important for cleavage of target proteins" evidence="2">
    <location>
        <begin position="376"/>
        <end position="380"/>
    </location>
</feature>
<feature type="region of interest" description="Important for cleavage of target proteins" evidence="2">
    <location>
        <begin position="431"/>
        <end position="433"/>
    </location>
</feature>
<feature type="region of interest" description="Interaction with MTCH1" evidence="2">
    <location>
        <begin position="463"/>
        <end position="466"/>
    </location>
</feature>
<feature type="short sequence motif" description="PAL" evidence="9">
    <location>
        <begin position="432"/>
        <end position="434"/>
    </location>
</feature>
<feature type="compositionally biased region" description="Polar residues" evidence="6">
    <location>
        <begin position="10"/>
        <end position="29"/>
    </location>
</feature>
<feature type="compositionally biased region" description="Polar residues" evidence="6">
    <location>
        <begin position="310"/>
        <end position="327"/>
    </location>
</feature>
<feature type="active site" evidence="2">
    <location>
        <position position="256"/>
    </location>
</feature>
<feature type="active site" evidence="2">
    <location>
        <position position="384"/>
    </location>
</feature>
<feature type="site" description="Cleavage; alternate" evidence="2">
    <location>
        <begin position="290"/>
        <end position="291"/>
    </location>
</feature>
<feature type="site" description="Cleavage; alternate" evidence="2">
    <location>
        <begin position="291"/>
        <end position="292"/>
    </location>
</feature>
<feature type="site" description="Cleavage" evidence="2">
    <location>
        <begin position="297"/>
        <end position="298"/>
    </location>
</feature>
<feature type="site" description="Cleavage; by caspase">
    <location>
        <begin position="344"/>
        <end position="345"/>
    </location>
</feature>
<feature type="modified residue" description="Phosphoserine" evidence="4">
    <location>
        <position position="50"/>
    </location>
</feature>
<feature type="modified residue" description="Phosphoserine; by PKA" evidence="2">
    <location>
        <position position="309"/>
    </location>
</feature>
<feature type="modified residue" description="Phosphothreonine" evidence="4">
    <location>
        <position position="328"/>
    </location>
</feature>
<feature type="modified residue" description="Phosphoserine" evidence="4">
    <location>
        <position position="330"/>
    </location>
</feature>
<feature type="modified residue" description="Phosphoserine; by PKC" evidence="2">
    <location>
        <position position="345"/>
    </location>
</feature>
<feature type="modified residue" description="Phosphoserine" evidence="3">
    <location>
        <position position="370"/>
    </location>
</feature>
<feature type="splice variant" id="VSP_018569" description="In isoform I-462." evidence="8">
    <location>
        <begin position="26"/>
        <end position="29"/>
    </location>
</feature>
<proteinExistence type="evidence at transcript level"/>
<protein>
    <recommendedName>
        <fullName>Presenilin-1</fullName>
        <shortName>PS-1</shortName>
        <ecNumber>3.4.23.-</ecNumber>
    </recommendedName>
    <component>
        <recommendedName>
            <fullName>Presenilin-1 NTF subunit</fullName>
        </recommendedName>
    </component>
    <component>
        <recommendedName>
            <fullName>Presenilin-1 CTF subunit</fullName>
        </recommendedName>
    </component>
    <component>
        <recommendedName>
            <fullName>Presenilin-1 CTF12</fullName>
            <shortName>PS1-CTF12</shortName>
        </recommendedName>
    </component>
</protein>
<keyword id="KW-0025">Alternative splicing</keyword>
<keyword id="KW-0053">Apoptosis</keyword>
<keyword id="KW-0130">Cell adhesion</keyword>
<keyword id="KW-1003">Cell membrane</keyword>
<keyword id="KW-0966">Cell projection</keyword>
<keyword id="KW-0256">Endoplasmic reticulum</keyword>
<keyword id="KW-0967">Endosome</keyword>
<keyword id="KW-0333">Golgi apparatus</keyword>
<keyword id="KW-0378">Hydrolase</keyword>
<keyword id="KW-0472">Membrane</keyword>
<keyword id="KW-0914">Notch signaling pathway</keyword>
<keyword id="KW-0597">Phosphoprotein</keyword>
<keyword id="KW-0645">Protease</keyword>
<keyword id="KW-1185">Reference proteome</keyword>
<keyword id="KW-0770">Synapse</keyword>
<keyword id="KW-0812">Transmembrane</keyword>
<keyword id="KW-1133">Transmembrane helix</keyword>
<organism>
    <name type="scientific">Canis lupus familiaris</name>
    <name type="common">Dog</name>
    <name type="synonym">Canis familiaris</name>
    <dbReference type="NCBI Taxonomy" id="9615"/>
    <lineage>
        <taxon>Eukaryota</taxon>
        <taxon>Metazoa</taxon>
        <taxon>Chordata</taxon>
        <taxon>Craniata</taxon>
        <taxon>Vertebrata</taxon>
        <taxon>Euteleostomi</taxon>
        <taxon>Mammalia</taxon>
        <taxon>Eutheria</taxon>
        <taxon>Laurasiatheria</taxon>
        <taxon>Carnivora</taxon>
        <taxon>Caniformia</taxon>
        <taxon>Canidae</taxon>
        <taxon>Canis</taxon>
    </lineage>
</organism>
<reference key="1">
    <citation type="submission" date="2003-12" db="EMBL/GenBank/DDBJ databases">
        <title>Sequence analysis and chromosomal mapping of presenilin-1 and amyloid precursor protein genes in dogs.</title>
        <authorList>
            <person name="Nakata M."/>
        </authorList>
    </citation>
    <scope>NUCLEOTIDE SEQUENCE [MRNA] (ISOFORMS I-462 AND I-466)</scope>
</reference>
<reference key="2">
    <citation type="journal article" date="2001" name="Proc. Natl. Acad. Sci. U.S.A.">
        <title>Presenilin-1 binds cytoplasmic epithelial cadherin, inhibits cadherin/p120 association, and regulates stability and function of the cadherin/catenin adhesion complex.</title>
        <authorList>
            <person name="Baki L."/>
            <person name="Marambaud P."/>
            <person name="Efthimiopoulos S."/>
            <person name="Georgakopoulos A."/>
            <person name="Wen P."/>
            <person name="Cui W."/>
            <person name="Shioi J."/>
            <person name="Koo E."/>
            <person name="Ozawa M."/>
            <person name="Friedrich V.L."/>
            <person name="Robakis N.K."/>
        </authorList>
    </citation>
    <scope>IDENTIFICATION IN COMPLEX WITH CDH1; CTNNB1; CTNND1 AND JUP</scope>
</reference>
<evidence type="ECO:0000250" key="1"/>
<evidence type="ECO:0000250" key="2">
    <source>
        <dbReference type="UniProtKB" id="P49768"/>
    </source>
</evidence>
<evidence type="ECO:0000250" key="3">
    <source>
        <dbReference type="UniProtKB" id="P49769"/>
    </source>
</evidence>
<evidence type="ECO:0000250" key="4">
    <source>
        <dbReference type="UniProtKB" id="P97887"/>
    </source>
</evidence>
<evidence type="ECO:0000250" key="5">
    <source>
        <dbReference type="UniProtKB" id="Q4JIM4"/>
    </source>
</evidence>
<evidence type="ECO:0000256" key="6">
    <source>
        <dbReference type="SAM" id="MobiDB-lite"/>
    </source>
</evidence>
<evidence type="ECO:0000269" key="7">
    <source>
    </source>
</evidence>
<evidence type="ECO:0000303" key="8">
    <source ref="1"/>
</evidence>
<evidence type="ECO:0000305" key="9"/>
<accession>Q6RH31</accession>
<accession>Q6RH32</accession>